<name>RL13A_YEAST</name>
<keyword id="KW-0002">3D-structure</keyword>
<keyword id="KW-0963">Cytoplasm</keyword>
<keyword id="KW-0597">Phosphoprotein</keyword>
<keyword id="KW-1185">Reference proteome</keyword>
<keyword id="KW-0687">Ribonucleoprotein</keyword>
<keyword id="KW-0689">Ribosomal protein</keyword>
<protein>
    <recommendedName>
        <fullName evidence="5">Large ribosomal subunit protein eL13A</fullName>
    </recommendedName>
    <alternativeName>
        <fullName evidence="6">60S ribosomal protein L13-A</fullName>
    </alternativeName>
</protein>
<proteinExistence type="evidence at protein level"/>
<accession>Q12690</accession>
<accession>D6VRR7</accession>
<feature type="chain" id="PRO_0000192938" description="Large ribosomal subunit protein eL13A">
    <location>
        <begin position="1"/>
        <end position="199"/>
    </location>
</feature>
<feature type="modified residue" description="Phosphothreonine" evidence="1">
    <location>
        <position position="144"/>
    </location>
</feature>
<feature type="modified residue" description="Phosphothreonine" evidence="1">
    <location>
        <position position="152"/>
    </location>
</feature>
<feature type="strand" evidence="10">
    <location>
        <begin position="23"/>
        <end position="25"/>
    </location>
</feature>
<feature type="helix" evidence="10">
    <location>
        <begin position="28"/>
        <end position="45"/>
    </location>
</feature>
<feature type="strand" evidence="10">
    <location>
        <begin position="57"/>
        <end position="59"/>
    </location>
</feature>
<feature type="turn" evidence="10">
    <location>
        <begin position="63"/>
        <end position="67"/>
    </location>
</feature>
<feature type="strand" evidence="10">
    <location>
        <begin position="69"/>
        <end position="71"/>
    </location>
</feature>
<feature type="helix" evidence="11">
    <location>
        <begin position="77"/>
        <end position="82"/>
    </location>
</feature>
<feature type="helix" evidence="10">
    <location>
        <begin position="87"/>
        <end position="92"/>
    </location>
</feature>
<feature type="helix" evidence="11">
    <location>
        <begin position="106"/>
        <end position="116"/>
    </location>
</feature>
<feature type="strand" evidence="10">
    <location>
        <begin position="123"/>
        <end position="125"/>
    </location>
</feature>
<reference key="1">
    <citation type="journal article" date="1997" name="Nature">
        <title>The nucleotide sequence of Saccharomyces cerevisiae chromosome IV.</title>
        <authorList>
            <person name="Jacq C."/>
            <person name="Alt-Moerbe J."/>
            <person name="Andre B."/>
            <person name="Arnold W."/>
            <person name="Bahr A."/>
            <person name="Ballesta J.P.G."/>
            <person name="Bargues M."/>
            <person name="Baron L."/>
            <person name="Becker A."/>
            <person name="Biteau N."/>
            <person name="Bloecker H."/>
            <person name="Blugeon C."/>
            <person name="Boskovic J."/>
            <person name="Brandt P."/>
            <person name="Brueckner M."/>
            <person name="Buitrago M.J."/>
            <person name="Coster F."/>
            <person name="Delaveau T."/>
            <person name="del Rey F."/>
            <person name="Dujon B."/>
            <person name="Eide L.G."/>
            <person name="Garcia-Cantalejo J.M."/>
            <person name="Goffeau A."/>
            <person name="Gomez-Peris A."/>
            <person name="Granotier C."/>
            <person name="Hanemann V."/>
            <person name="Hankeln T."/>
            <person name="Hoheisel J.D."/>
            <person name="Jaeger W."/>
            <person name="Jimenez A."/>
            <person name="Jonniaux J.-L."/>
            <person name="Kraemer C."/>
            <person name="Kuester H."/>
            <person name="Laamanen P."/>
            <person name="Legros Y."/>
            <person name="Louis E.J."/>
            <person name="Moeller-Rieker S."/>
            <person name="Monnet A."/>
            <person name="Moro M."/>
            <person name="Mueller-Auer S."/>
            <person name="Nussbaumer B."/>
            <person name="Paricio N."/>
            <person name="Paulin L."/>
            <person name="Perea J."/>
            <person name="Perez-Alonso M."/>
            <person name="Perez-Ortin J.E."/>
            <person name="Pohl T.M."/>
            <person name="Prydz H."/>
            <person name="Purnelle B."/>
            <person name="Rasmussen S.W."/>
            <person name="Remacha M.A."/>
            <person name="Revuelta J.L."/>
            <person name="Rieger M."/>
            <person name="Salom D."/>
            <person name="Saluz H.P."/>
            <person name="Saiz J.E."/>
            <person name="Saren A.-M."/>
            <person name="Schaefer M."/>
            <person name="Scharfe M."/>
            <person name="Schmidt E.R."/>
            <person name="Schneider C."/>
            <person name="Scholler P."/>
            <person name="Schwarz S."/>
            <person name="Soler-Mira A."/>
            <person name="Urrestarazu L.A."/>
            <person name="Verhasselt P."/>
            <person name="Vissers S."/>
            <person name="Voet M."/>
            <person name="Volckaert G."/>
            <person name="Wagner G."/>
            <person name="Wambutt R."/>
            <person name="Wedler E."/>
            <person name="Wedler H."/>
            <person name="Woelfl S."/>
            <person name="Harris D.E."/>
            <person name="Bowman S."/>
            <person name="Brown D."/>
            <person name="Churcher C.M."/>
            <person name="Connor R."/>
            <person name="Dedman K."/>
            <person name="Gentles S."/>
            <person name="Hamlin N."/>
            <person name="Hunt S."/>
            <person name="Jones L."/>
            <person name="McDonald S."/>
            <person name="Murphy L.D."/>
            <person name="Niblett D."/>
            <person name="Odell C."/>
            <person name="Oliver K."/>
            <person name="Rajandream M.A."/>
            <person name="Richards C."/>
            <person name="Shore L."/>
            <person name="Walsh S.V."/>
            <person name="Barrell B.G."/>
            <person name="Dietrich F.S."/>
            <person name="Mulligan J.T."/>
            <person name="Allen E."/>
            <person name="Araujo R."/>
            <person name="Aviles E."/>
            <person name="Berno A."/>
            <person name="Carpenter J."/>
            <person name="Chen E."/>
            <person name="Cherry J.M."/>
            <person name="Chung E."/>
            <person name="Duncan M."/>
            <person name="Hunicke-Smith S."/>
            <person name="Hyman R.W."/>
            <person name="Komp C."/>
            <person name="Lashkari D."/>
            <person name="Lew H."/>
            <person name="Lin D."/>
            <person name="Mosedale D."/>
            <person name="Nakahara K."/>
            <person name="Namath A."/>
            <person name="Oefner P."/>
            <person name="Oh C."/>
            <person name="Petel F.X."/>
            <person name="Roberts D."/>
            <person name="Schramm S."/>
            <person name="Schroeder M."/>
            <person name="Shogren T."/>
            <person name="Shroff N."/>
            <person name="Winant A."/>
            <person name="Yelton M.A."/>
            <person name="Botstein D."/>
            <person name="Davis R.W."/>
            <person name="Johnston M."/>
            <person name="Andrews S."/>
            <person name="Brinkman R."/>
            <person name="Cooper J."/>
            <person name="Ding H."/>
            <person name="Du Z."/>
            <person name="Favello A."/>
            <person name="Fulton L."/>
            <person name="Gattung S."/>
            <person name="Greco T."/>
            <person name="Hallsworth K."/>
            <person name="Hawkins J."/>
            <person name="Hillier L.W."/>
            <person name="Jier M."/>
            <person name="Johnson D."/>
            <person name="Johnston L."/>
            <person name="Kirsten J."/>
            <person name="Kucaba T."/>
            <person name="Langston Y."/>
            <person name="Latreille P."/>
            <person name="Le T."/>
            <person name="Mardis E."/>
            <person name="Menezes S."/>
            <person name="Miller N."/>
            <person name="Nhan M."/>
            <person name="Pauley A."/>
            <person name="Peluso D."/>
            <person name="Rifkin L."/>
            <person name="Riles L."/>
            <person name="Taich A."/>
            <person name="Trevaskis E."/>
            <person name="Vignati D."/>
            <person name="Wilcox L."/>
            <person name="Wohldman P."/>
            <person name="Vaudin M."/>
            <person name="Wilson R."/>
            <person name="Waterston R."/>
            <person name="Albermann K."/>
            <person name="Hani J."/>
            <person name="Heumann K."/>
            <person name="Kleine K."/>
            <person name="Mewes H.-W."/>
            <person name="Zollner A."/>
            <person name="Zaccaria P."/>
        </authorList>
    </citation>
    <scope>NUCLEOTIDE SEQUENCE [LARGE SCALE GENOMIC DNA]</scope>
    <source>
        <strain>ATCC 204508 / S288c</strain>
    </source>
</reference>
<reference key="2">
    <citation type="journal article" date="2014" name="G3 (Bethesda)">
        <title>The reference genome sequence of Saccharomyces cerevisiae: Then and now.</title>
        <authorList>
            <person name="Engel S.R."/>
            <person name="Dietrich F.S."/>
            <person name="Fisk D.G."/>
            <person name="Binkley G."/>
            <person name="Balakrishnan R."/>
            <person name="Costanzo M.C."/>
            <person name="Dwight S.S."/>
            <person name="Hitz B.C."/>
            <person name="Karra K."/>
            <person name="Nash R.S."/>
            <person name="Weng S."/>
            <person name="Wong E.D."/>
            <person name="Lloyd P."/>
            <person name="Skrzypek M.S."/>
            <person name="Miyasato S.R."/>
            <person name="Simison M."/>
            <person name="Cherry J.M."/>
        </authorList>
    </citation>
    <scope>GENOME REANNOTATION</scope>
    <source>
        <strain>ATCC 204508 / S288c</strain>
    </source>
</reference>
<reference key="3">
    <citation type="journal article" date="1998" name="Yeast">
        <title>The list of cytoplasmic ribosomal proteins of Saccharomyces cerevisiae.</title>
        <authorList>
            <person name="Planta R.J."/>
            <person name="Mager W.H."/>
        </authorList>
    </citation>
    <scope>NOMENCLATURE</scope>
    <scope>SUBUNIT</scope>
</reference>
<reference key="4">
    <citation type="journal article" date="2003" name="Nature">
        <title>Global analysis of protein localization in budding yeast.</title>
        <authorList>
            <person name="Huh W.-K."/>
            <person name="Falvo J.V."/>
            <person name="Gerke L.C."/>
            <person name="Carroll A.S."/>
            <person name="Howson R.W."/>
            <person name="Weissman J.S."/>
            <person name="O'Shea E.K."/>
        </authorList>
    </citation>
    <scope>SUBCELLULAR LOCATION [LARGE SCALE ANALYSIS]</scope>
</reference>
<reference key="5">
    <citation type="journal article" date="2003" name="Nature">
        <title>Global analysis of protein expression in yeast.</title>
        <authorList>
            <person name="Ghaemmaghami S."/>
            <person name="Huh W.-K."/>
            <person name="Bower K."/>
            <person name="Howson R.W."/>
            <person name="Belle A."/>
            <person name="Dephoure N."/>
            <person name="O'Shea E.K."/>
            <person name="Weissman J.S."/>
        </authorList>
    </citation>
    <scope>LEVEL OF PROTEIN EXPRESSION [LARGE SCALE ANALYSIS]</scope>
</reference>
<reference key="6">
    <citation type="journal article" date="2014" name="Curr. Opin. Struct. Biol.">
        <title>A new system for naming ribosomal proteins.</title>
        <authorList>
            <person name="Ban N."/>
            <person name="Beckmann R."/>
            <person name="Cate J.H.D."/>
            <person name="Dinman J.D."/>
            <person name="Dragon F."/>
            <person name="Ellis S.R."/>
            <person name="Lafontaine D.L.J."/>
            <person name="Lindahl L."/>
            <person name="Liljas A."/>
            <person name="Lipton J.M."/>
            <person name="McAlear M.A."/>
            <person name="Moore P.B."/>
            <person name="Noller H.F."/>
            <person name="Ortega J."/>
            <person name="Panse V.G."/>
            <person name="Ramakrishnan V."/>
            <person name="Spahn C.M.T."/>
            <person name="Steitz T.A."/>
            <person name="Tchorzewski M."/>
            <person name="Tollervey D."/>
            <person name="Warren A.J."/>
            <person name="Williamson J.R."/>
            <person name="Wilson D."/>
            <person name="Yonath A."/>
            <person name="Yusupov M."/>
        </authorList>
    </citation>
    <scope>NOMENCLATURE</scope>
</reference>
<reference key="7">
    <citation type="journal article" date="2010" name="Science">
        <title>Crystal structure of the eukaryotic ribosome.</title>
        <authorList>
            <person name="Ben-Shem A."/>
            <person name="Jenner L."/>
            <person name="Yusupova G."/>
            <person name="Yusupov M."/>
        </authorList>
    </citation>
    <scope>X-RAY CRYSTALLOGRAPHY (4.0 ANGSTROMS) OF 80S RIBOSOME</scope>
</reference>
<reference key="8">
    <citation type="journal article" date="2011" name="Science">
        <title>The structure of the eukaryotic ribosome at 3.0 A resolution.</title>
        <authorList>
            <person name="Ben-Shem A."/>
            <person name="Garreau de Loubresse N."/>
            <person name="Melnikov S."/>
            <person name="Jenner L."/>
            <person name="Yusupova G."/>
            <person name="Yusupov M."/>
        </authorList>
    </citation>
    <scope>X-RAY CRYSTALLOGRAPHY (3.0 ANGSTROMS) OF 80S RIBOSOME</scope>
    <scope>SUBUNIT</scope>
    <scope>SUBCELLULAR LOCATION</scope>
</reference>
<sequence length="199" mass="22554">MAISKNLPILKNHFRKHWQERVKVHFDQAGKKVSRRNARATRAAKIAPRPLDLLRPVVRAPTVKYNRKVRAGRGFTLAEVKAAGLTAAYARTIGIAVDHRRQNRNQEIFDANVQRLKEYQSKIIVFPRNGKAPEAEQVLSAAATFPIAQPATDVEARAVQDNGESAFRTLRLARSEKKFRGIREKRAREKAEAEAEKKK</sequence>
<gene>
    <name evidence="6" type="primary">RPL13A</name>
    <name type="ordered locus">YDL082W</name>
</gene>
<organism>
    <name type="scientific">Saccharomyces cerevisiae (strain ATCC 204508 / S288c)</name>
    <name type="common">Baker's yeast</name>
    <dbReference type="NCBI Taxonomy" id="559292"/>
    <lineage>
        <taxon>Eukaryota</taxon>
        <taxon>Fungi</taxon>
        <taxon>Dikarya</taxon>
        <taxon>Ascomycota</taxon>
        <taxon>Saccharomycotina</taxon>
        <taxon>Saccharomycetes</taxon>
        <taxon>Saccharomycetales</taxon>
        <taxon>Saccharomycetaceae</taxon>
        <taxon>Saccharomyces</taxon>
    </lineage>
</organism>
<evidence type="ECO:0000250" key="1">
    <source>
        <dbReference type="UniProtKB" id="P40212"/>
    </source>
</evidence>
<evidence type="ECO:0000269" key="2">
    <source>
    </source>
</evidence>
<evidence type="ECO:0000269" key="3">
    <source>
    </source>
</evidence>
<evidence type="ECO:0000269" key="4">
    <source>
    </source>
</evidence>
<evidence type="ECO:0000303" key="5">
    <source>
    </source>
</evidence>
<evidence type="ECO:0000303" key="6">
    <source>
    </source>
</evidence>
<evidence type="ECO:0000305" key="7"/>
<evidence type="ECO:0000305" key="8">
    <source>
    </source>
</evidence>
<evidence type="ECO:0000305" key="9">
    <source>
    </source>
</evidence>
<evidence type="ECO:0007829" key="10">
    <source>
        <dbReference type="PDB" id="6EM3"/>
    </source>
</evidence>
<evidence type="ECO:0007829" key="11">
    <source>
        <dbReference type="PDB" id="7R6Q"/>
    </source>
</evidence>
<comment type="function">
    <text evidence="8">Component of the ribosome, a large ribonucleoprotein complex responsible for the synthesis of proteins in the cell. The small ribosomal subunit (SSU) binds messenger RNAs (mRNAs) and translates the encoded message by selecting cognate aminoacyl-transfer RNA (tRNA) molecules. The large subunit (LSU) contains the ribosomal catalytic site termed the peptidyl transferase center (PTC), which catalyzes the formation of peptide bonds, thereby polymerizing the amino acids delivered by tRNAs into a polypeptide chain. The nascent polypeptides leave the ribosome through a tunnel in the LSU and interact with protein factors that function in enzymatic processing, targeting, and the membrane insertion of nascent chains at the exit of the ribosomal tunnel.</text>
</comment>
<comment type="subunit">
    <text evidence="4 9">Component of the large ribosomal subunit (LSU). Mature yeast ribosomes consist of a small (40S) and a large (60S) subunit. The 40S small subunit contains 1 molecule of ribosomal RNA (18S rRNA) and 33 different proteins (encoded by 57 genes). The large 60S subunit contains 3 rRNA molecules (25S, 5.8S and 5S rRNA) and 46 different proteins (encoded by 81 genes) (PubMed:22096102, PubMed:9559554).</text>
</comment>
<comment type="subcellular location">
    <subcellularLocation>
        <location evidence="2 4">Cytoplasm</location>
    </subcellularLocation>
</comment>
<comment type="miscellaneous">
    <text evidence="3">Present with 133000 molecules/cell in log phase SD medium.</text>
</comment>
<comment type="miscellaneous">
    <text evidence="7">There are 2 genes for eL13 in yeast.</text>
</comment>
<comment type="similarity">
    <text evidence="7">Belongs to the eukaryotic ribosomal protein eL13 family.</text>
</comment>
<dbReference type="EMBL" id="Z74130">
    <property type="protein sequence ID" value="CAA98648.1"/>
    <property type="molecule type" value="Genomic_DNA"/>
</dbReference>
<dbReference type="EMBL" id="BK006938">
    <property type="protein sequence ID" value="DAA11777.1"/>
    <property type="molecule type" value="Genomic_DNA"/>
</dbReference>
<dbReference type="PIR" id="S67618">
    <property type="entry name" value="S67618"/>
</dbReference>
<dbReference type="RefSeq" id="NP_010201.1">
    <property type="nucleotide sequence ID" value="NM_001180141.1"/>
</dbReference>
<dbReference type="PDB" id="3J6X">
    <property type="method" value="EM"/>
    <property type="resolution" value="6.10 A"/>
    <property type="chains" value="53=1-199"/>
</dbReference>
<dbReference type="PDB" id="3J6Y">
    <property type="method" value="EM"/>
    <property type="resolution" value="6.10 A"/>
    <property type="chains" value="53=1-199"/>
</dbReference>
<dbReference type="PDB" id="3J77">
    <property type="method" value="EM"/>
    <property type="resolution" value="6.20 A"/>
    <property type="chains" value="63=1-199"/>
</dbReference>
<dbReference type="PDB" id="3J78">
    <property type="method" value="EM"/>
    <property type="resolution" value="6.30 A"/>
    <property type="chains" value="63=1-199"/>
</dbReference>
<dbReference type="PDB" id="3JCT">
    <property type="method" value="EM"/>
    <property type="resolution" value="3.08 A"/>
    <property type="chains" value="L=1-199"/>
</dbReference>
<dbReference type="PDB" id="4U3M">
    <property type="method" value="X-ray"/>
    <property type="resolution" value="3.00 A"/>
    <property type="chains" value="M3/m3=2-199"/>
</dbReference>
<dbReference type="PDB" id="4U3N">
    <property type="method" value="X-ray"/>
    <property type="resolution" value="3.20 A"/>
    <property type="chains" value="M3/m3=2-199"/>
</dbReference>
<dbReference type="PDB" id="4U3U">
    <property type="method" value="X-ray"/>
    <property type="resolution" value="2.90 A"/>
    <property type="chains" value="M3/m3=2-199"/>
</dbReference>
<dbReference type="PDB" id="4U4N">
    <property type="method" value="X-ray"/>
    <property type="resolution" value="3.10 A"/>
    <property type="chains" value="M3/m3=2-199"/>
</dbReference>
<dbReference type="PDB" id="4U4O">
    <property type="method" value="X-ray"/>
    <property type="resolution" value="3.60 A"/>
    <property type="chains" value="M3/m3=2-199"/>
</dbReference>
<dbReference type="PDB" id="4U4Q">
    <property type="method" value="X-ray"/>
    <property type="resolution" value="3.00 A"/>
    <property type="chains" value="M3/m3=2-199"/>
</dbReference>
<dbReference type="PDB" id="4U4R">
    <property type="method" value="X-ray"/>
    <property type="resolution" value="2.80 A"/>
    <property type="chains" value="M3/m3=2-199"/>
</dbReference>
<dbReference type="PDB" id="4U4U">
    <property type="method" value="X-ray"/>
    <property type="resolution" value="3.00 A"/>
    <property type="chains" value="M3/m3=2-199"/>
</dbReference>
<dbReference type="PDB" id="4U4Y">
    <property type="method" value="X-ray"/>
    <property type="resolution" value="3.20 A"/>
    <property type="chains" value="M3/m3=2-199"/>
</dbReference>
<dbReference type="PDB" id="4U4Z">
    <property type="method" value="X-ray"/>
    <property type="resolution" value="3.10 A"/>
    <property type="chains" value="M3/m3=2-199"/>
</dbReference>
<dbReference type="PDB" id="4U50">
    <property type="method" value="X-ray"/>
    <property type="resolution" value="3.20 A"/>
    <property type="chains" value="M3/m3=2-199"/>
</dbReference>
<dbReference type="PDB" id="4U51">
    <property type="method" value="X-ray"/>
    <property type="resolution" value="3.20 A"/>
    <property type="chains" value="M3/m3=2-199"/>
</dbReference>
<dbReference type="PDB" id="4U52">
    <property type="method" value="X-ray"/>
    <property type="resolution" value="3.00 A"/>
    <property type="chains" value="M3/m3=2-199"/>
</dbReference>
<dbReference type="PDB" id="4U53">
    <property type="method" value="X-ray"/>
    <property type="resolution" value="3.30 A"/>
    <property type="chains" value="M3/m3=2-199"/>
</dbReference>
<dbReference type="PDB" id="4U55">
    <property type="method" value="X-ray"/>
    <property type="resolution" value="3.20 A"/>
    <property type="chains" value="M3/m3=2-199"/>
</dbReference>
<dbReference type="PDB" id="4U56">
    <property type="method" value="X-ray"/>
    <property type="resolution" value="3.45 A"/>
    <property type="chains" value="M3/m3=2-199"/>
</dbReference>
<dbReference type="PDB" id="4U6F">
    <property type="method" value="X-ray"/>
    <property type="resolution" value="3.10 A"/>
    <property type="chains" value="M3/m3=2-199"/>
</dbReference>
<dbReference type="PDB" id="4V7F">
    <property type="method" value="EM"/>
    <property type="resolution" value="8.70 A"/>
    <property type="chains" value="K=1-199"/>
</dbReference>
<dbReference type="PDB" id="4V88">
    <property type="method" value="X-ray"/>
    <property type="resolution" value="3.00 A"/>
    <property type="chains" value="BL/DL=1-199"/>
</dbReference>
<dbReference type="PDB" id="4V8T">
    <property type="method" value="EM"/>
    <property type="resolution" value="8.10 A"/>
    <property type="chains" value="L=1-199"/>
</dbReference>
<dbReference type="PDB" id="4V8Y">
    <property type="method" value="EM"/>
    <property type="resolution" value="4.30 A"/>
    <property type="chains" value="BL=2-199"/>
</dbReference>
<dbReference type="PDB" id="4V8Z">
    <property type="method" value="EM"/>
    <property type="resolution" value="6.60 A"/>
    <property type="chains" value="BL=2-199"/>
</dbReference>
<dbReference type="PDB" id="5APN">
    <property type="method" value="EM"/>
    <property type="resolution" value="3.91 A"/>
    <property type="chains" value="L=1-199"/>
</dbReference>
<dbReference type="PDB" id="5APO">
    <property type="method" value="EM"/>
    <property type="resolution" value="3.41 A"/>
    <property type="chains" value="L=1-199"/>
</dbReference>
<dbReference type="PDB" id="5DAT">
    <property type="method" value="X-ray"/>
    <property type="resolution" value="3.15 A"/>
    <property type="chains" value="M3/m3=2-199"/>
</dbReference>
<dbReference type="PDB" id="5DC3">
    <property type="method" value="X-ray"/>
    <property type="resolution" value="3.25 A"/>
    <property type="chains" value="M3/m3=2-199"/>
</dbReference>
<dbReference type="PDB" id="5DGE">
    <property type="method" value="X-ray"/>
    <property type="resolution" value="3.45 A"/>
    <property type="chains" value="M3/m3=2-199"/>
</dbReference>
<dbReference type="PDB" id="5DGF">
    <property type="method" value="X-ray"/>
    <property type="resolution" value="3.30 A"/>
    <property type="chains" value="M3/m3=2-199"/>
</dbReference>
<dbReference type="PDB" id="5DGV">
    <property type="method" value="X-ray"/>
    <property type="resolution" value="3.10 A"/>
    <property type="chains" value="M3/m3=2-199"/>
</dbReference>
<dbReference type="PDB" id="5FCI">
    <property type="method" value="X-ray"/>
    <property type="resolution" value="3.40 A"/>
    <property type="chains" value="M3/m3=2-199"/>
</dbReference>
<dbReference type="PDB" id="5FCJ">
    <property type="method" value="X-ray"/>
    <property type="resolution" value="3.10 A"/>
    <property type="chains" value="M3/m3=2-199"/>
</dbReference>
<dbReference type="PDB" id="5GAK">
    <property type="method" value="EM"/>
    <property type="resolution" value="3.88 A"/>
    <property type="chains" value="N=1-199"/>
</dbReference>
<dbReference type="PDB" id="5H4P">
    <property type="method" value="EM"/>
    <property type="resolution" value="3.07 A"/>
    <property type="chains" value="L=1-199"/>
</dbReference>
<dbReference type="PDB" id="5I4L">
    <property type="method" value="X-ray"/>
    <property type="resolution" value="3.10 A"/>
    <property type="chains" value="M3/m3=2-195"/>
</dbReference>
<dbReference type="PDB" id="5JCS">
    <property type="method" value="EM"/>
    <property type="resolution" value="9.50 A"/>
    <property type="chains" value="L=1-199"/>
</dbReference>
<dbReference type="PDB" id="5JUO">
    <property type="method" value="EM"/>
    <property type="resolution" value="4.00 A"/>
    <property type="chains" value="Q=1-199"/>
</dbReference>
<dbReference type="PDB" id="5JUP">
    <property type="method" value="EM"/>
    <property type="resolution" value="3.50 A"/>
    <property type="chains" value="Q=1-199"/>
</dbReference>
<dbReference type="PDB" id="5JUS">
    <property type="method" value="EM"/>
    <property type="resolution" value="4.20 A"/>
    <property type="chains" value="Q=1-199"/>
</dbReference>
<dbReference type="PDB" id="5JUT">
    <property type="method" value="EM"/>
    <property type="resolution" value="4.00 A"/>
    <property type="chains" value="Q=1-199"/>
</dbReference>
<dbReference type="PDB" id="5JUU">
    <property type="method" value="EM"/>
    <property type="resolution" value="4.00 A"/>
    <property type="chains" value="Q=1-199"/>
</dbReference>
<dbReference type="PDB" id="5LYB">
    <property type="method" value="X-ray"/>
    <property type="resolution" value="3.25 A"/>
    <property type="chains" value="M3/m3=2-195"/>
</dbReference>
<dbReference type="PDB" id="5M1J">
    <property type="method" value="EM"/>
    <property type="resolution" value="3.30 A"/>
    <property type="chains" value="L5=2-194"/>
</dbReference>
<dbReference type="PDB" id="5MC6">
    <property type="method" value="EM"/>
    <property type="resolution" value="3.80 A"/>
    <property type="chains" value="AJ=1-199"/>
</dbReference>
<dbReference type="PDB" id="5MEI">
    <property type="method" value="X-ray"/>
    <property type="resolution" value="3.50 A"/>
    <property type="chains" value="CN/t=2-194"/>
</dbReference>
<dbReference type="PDB" id="5NDG">
    <property type="method" value="X-ray"/>
    <property type="resolution" value="3.70 A"/>
    <property type="chains" value="M3/m3=2-195"/>
</dbReference>
<dbReference type="PDB" id="5NDV">
    <property type="method" value="X-ray"/>
    <property type="resolution" value="3.30 A"/>
    <property type="chains" value="M3/m3=2-195"/>
</dbReference>
<dbReference type="PDB" id="5NDW">
    <property type="method" value="X-ray"/>
    <property type="resolution" value="3.70 A"/>
    <property type="chains" value="M3/m3=2-195"/>
</dbReference>
<dbReference type="PDB" id="5OBM">
    <property type="method" value="X-ray"/>
    <property type="resolution" value="3.40 A"/>
    <property type="chains" value="M3/m3=2-195"/>
</dbReference>
<dbReference type="PDB" id="5ON6">
    <property type="method" value="X-ray"/>
    <property type="resolution" value="3.10 A"/>
    <property type="chains" value="CN/t=2-194"/>
</dbReference>
<dbReference type="PDB" id="5T62">
    <property type="method" value="EM"/>
    <property type="resolution" value="3.30 A"/>
    <property type="chains" value="N=1-199"/>
</dbReference>
<dbReference type="PDB" id="5T6R">
    <property type="method" value="EM"/>
    <property type="resolution" value="4.50 A"/>
    <property type="chains" value="N=1-199"/>
</dbReference>
<dbReference type="PDB" id="5TBW">
    <property type="method" value="X-ray"/>
    <property type="resolution" value="3.00 A"/>
    <property type="chains" value="CN/t=2-194"/>
</dbReference>
<dbReference type="PDB" id="5TGA">
    <property type="method" value="X-ray"/>
    <property type="resolution" value="3.30 A"/>
    <property type="chains" value="M3/m3=2-195"/>
</dbReference>
<dbReference type="PDB" id="5TGM">
    <property type="method" value="X-ray"/>
    <property type="resolution" value="3.50 A"/>
    <property type="chains" value="M3/m3=2-195"/>
</dbReference>
<dbReference type="PDB" id="5Z3G">
    <property type="method" value="EM"/>
    <property type="resolution" value="3.65 A"/>
    <property type="chains" value="P=1-199"/>
</dbReference>
<dbReference type="PDB" id="6C0F">
    <property type="method" value="EM"/>
    <property type="resolution" value="3.70 A"/>
    <property type="chains" value="L=1-199"/>
</dbReference>
<dbReference type="PDB" id="6CB1">
    <property type="method" value="EM"/>
    <property type="resolution" value="4.60 A"/>
    <property type="chains" value="L=1-199"/>
</dbReference>
<dbReference type="PDB" id="6ELZ">
    <property type="method" value="EM"/>
    <property type="resolution" value="3.30 A"/>
    <property type="chains" value="L=1-199"/>
</dbReference>
<dbReference type="PDB" id="6EM1">
    <property type="method" value="EM"/>
    <property type="resolution" value="3.60 A"/>
    <property type="chains" value="L=1-199"/>
</dbReference>
<dbReference type="PDB" id="6EM3">
    <property type="method" value="EM"/>
    <property type="resolution" value="3.20 A"/>
    <property type="chains" value="L=1-199"/>
</dbReference>
<dbReference type="PDB" id="6EM4">
    <property type="method" value="EM"/>
    <property type="resolution" value="4.10 A"/>
    <property type="chains" value="L=1-199"/>
</dbReference>
<dbReference type="PDB" id="6EM5">
    <property type="method" value="EM"/>
    <property type="resolution" value="4.30 A"/>
    <property type="chains" value="L=1-199"/>
</dbReference>
<dbReference type="PDB" id="6FT6">
    <property type="method" value="EM"/>
    <property type="resolution" value="3.90 A"/>
    <property type="chains" value="L=1-199"/>
</dbReference>
<dbReference type="PDB" id="6GQ1">
    <property type="method" value="EM"/>
    <property type="resolution" value="4.40 A"/>
    <property type="chains" value="L=2-194"/>
</dbReference>
<dbReference type="PDB" id="6GQB">
    <property type="method" value="EM"/>
    <property type="resolution" value="3.90 A"/>
    <property type="chains" value="L=2-194"/>
</dbReference>
<dbReference type="PDB" id="6GQV">
    <property type="method" value="EM"/>
    <property type="resolution" value="4.00 A"/>
    <property type="chains" value="L=2-194"/>
</dbReference>
<dbReference type="PDB" id="6HD7">
    <property type="method" value="EM"/>
    <property type="resolution" value="3.40 A"/>
    <property type="chains" value="N=1-199"/>
</dbReference>
<dbReference type="PDB" id="6HHQ">
    <property type="method" value="X-ray"/>
    <property type="resolution" value="3.10 A"/>
    <property type="chains" value="CN/t=1-199"/>
</dbReference>
<dbReference type="PDB" id="6I7O">
    <property type="method" value="EM"/>
    <property type="resolution" value="5.30 A"/>
    <property type="chains" value="AJ/XJ=2-195"/>
</dbReference>
<dbReference type="PDB" id="6M62">
    <property type="method" value="EM"/>
    <property type="resolution" value="3.20 A"/>
    <property type="chains" value="L=1-199"/>
</dbReference>
<dbReference type="PDB" id="6N8J">
    <property type="method" value="EM"/>
    <property type="resolution" value="3.50 A"/>
    <property type="chains" value="L=1-199"/>
</dbReference>
<dbReference type="PDB" id="6N8K">
    <property type="method" value="EM"/>
    <property type="resolution" value="3.60 A"/>
    <property type="chains" value="L=1-199"/>
</dbReference>
<dbReference type="PDB" id="6N8L">
    <property type="method" value="EM"/>
    <property type="resolution" value="3.60 A"/>
    <property type="chains" value="L=1-199"/>
</dbReference>
<dbReference type="PDB" id="6N8M">
    <property type="method" value="EM"/>
    <property type="resolution" value="3.50 A"/>
    <property type="chains" value="N=1-199"/>
</dbReference>
<dbReference type="PDB" id="6N8N">
    <property type="method" value="EM"/>
    <property type="resolution" value="3.80 A"/>
    <property type="chains" value="N=1-199"/>
</dbReference>
<dbReference type="PDB" id="6N8O">
    <property type="method" value="EM"/>
    <property type="resolution" value="3.50 A"/>
    <property type="chains" value="N=1-199"/>
</dbReference>
<dbReference type="PDB" id="6OIG">
    <property type="method" value="EM"/>
    <property type="resolution" value="3.80 A"/>
    <property type="chains" value="L=2-194"/>
</dbReference>
<dbReference type="PDB" id="6Q8Y">
    <property type="method" value="EM"/>
    <property type="resolution" value="3.10 A"/>
    <property type="chains" value="AJ=2-194"/>
</dbReference>
<dbReference type="PDB" id="6QIK">
    <property type="method" value="EM"/>
    <property type="resolution" value="3.10 A"/>
    <property type="chains" value="K=1-199"/>
</dbReference>
<dbReference type="PDB" id="6QT0">
    <property type="method" value="EM"/>
    <property type="resolution" value="3.40 A"/>
    <property type="chains" value="K=1-199"/>
</dbReference>
<dbReference type="PDB" id="6QTZ">
    <property type="method" value="EM"/>
    <property type="resolution" value="3.50 A"/>
    <property type="chains" value="K=1-199"/>
</dbReference>
<dbReference type="PDB" id="6R84">
    <property type="method" value="EM"/>
    <property type="resolution" value="3.60 A"/>
    <property type="chains" value="N=2-194"/>
</dbReference>
<dbReference type="PDB" id="6R86">
    <property type="method" value="EM"/>
    <property type="resolution" value="3.40 A"/>
    <property type="chains" value="N=2-194"/>
</dbReference>
<dbReference type="PDB" id="6R87">
    <property type="method" value="EM"/>
    <property type="resolution" value="3.40 A"/>
    <property type="chains" value="N=2-194"/>
</dbReference>
<dbReference type="PDB" id="6RI5">
    <property type="method" value="EM"/>
    <property type="resolution" value="3.30 A"/>
    <property type="chains" value="K=1-199"/>
</dbReference>
<dbReference type="PDB" id="6RZZ">
    <property type="method" value="EM"/>
    <property type="resolution" value="3.20 A"/>
    <property type="chains" value="K=1-199"/>
</dbReference>
<dbReference type="PDB" id="6S05">
    <property type="method" value="EM"/>
    <property type="resolution" value="3.90 A"/>
    <property type="chains" value="K=1-199"/>
</dbReference>
<dbReference type="PDB" id="6S47">
    <property type="method" value="EM"/>
    <property type="resolution" value="3.28 A"/>
    <property type="chains" value="AN=2-199"/>
</dbReference>
<dbReference type="PDB" id="6SNT">
    <property type="method" value="EM"/>
    <property type="resolution" value="2.80 A"/>
    <property type="chains" value="r=1-199"/>
</dbReference>
<dbReference type="PDB" id="6SV4">
    <property type="method" value="EM"/>
    <property type="resolution" value="3.30 A"/>
    <property type="chains" value="AJ/XJ/zJ=1-199"/>
</dbReference>
<dbReference type="PDB" id="6T4Q">
    <property type="method" value="EM"/>
    <property type="resolution" value="2.60 A"/>
    <property type="chains" value="LL=2-194"/>
</dbReference>
<dbReference type="PDB" id="6T7I">
    <property type="method" value="EM"/>
    <property type="resolution" value="3.20 A"/>
    <property type="chains" value="LL=1-199"/>
</dbReference>
<dbReference type="PDB" id="6T7T">
    <property type="method" value="EM"/>
    <property type="resolution" value="3.10 A"/>
    <property type="chains" value="LL=1-199"/>
</dbReference>
<dbReference type="PDB" id="6T83">
    <property type="method" value="EM"/>
    <property type="resolution" value="4.00 A"/>
    <property type="chains" value="Ly/Na=1-199"/>
</dbReference>
<dbReference type="PDB" id="6TB3">
    <property type="method" value="EM"/>
    <property type="resolution" value="2.80 A"/>
    <property type="chains" value="AJ=2-194"/>
</dbReference>
<dbReference type="PDB" id="6TNU">
    <property type="method" value="EM"/>
    <property type="resolution" value="3.10 A"/>
    <property type="chains" value="AJ=2-194"/>
</dbReference>
<dbReference type="PDB" id="6WOO">
    <property type="method" value="EM"/>
    <property type="resolution" value="2.90 A"/>
    <property type="chains" value="L=2-199"/>
</dbReference>
<dbReference type="PDB" id="6XIQ">
    <property type="method" value="EM"/>
    <property type="resolution" value="4.20 A"/>
    <property type="chains" value="L=1-199"/>
</dbReference>
<dbReference type="PDB" id="6XIR">
    <property type="method" value="EM"/>
    <property type="resolution" value="3.20 A"/>
    <property type="chains" value="L=1-199"/>
</dbReference>
<dbReference type="PDB" id="6YLG">
    <property type="method" value="EM"/>
    <property type="resolution" value="3.00 A"/>
    <property type="chains" value="L=1-199"/>
</dbReference>
<dbReference type="PDB" id="6YLH">
    <property type="method" value="EM"/>
    <property type="resolution" value="3.10 A"/>
    <property type="chains" value="L=1-199"/>
</dbReference>
<dbReference type="PDB" id="6YLX">
    <property type="method" value="EM"/>
    <property type="resolution" value="3.90 A"/>
    <property type="chains" value="L=1-199"/>
</dbReference>
<dbReference type="PDB" id="6YLY">
    <property type="method" value="EM"/>
    <property type="resolution" value="3.80 A"/>
    <property type="chains" value="L=1-199"/>
</dbReference>
<dbReference type="PDB" id="6Z6J">
    <property type="method" value="EM"/>
    <property type="resolution" value="3.40 A"/>
    <property type="chains" value="LL=1-199"/>
</dbReference>
<dbReference type="PDB" id="6Z6K">
    <property type="method" value="EM"/>
    <property type="resolution" value="3.40 A"/>
    <property type="chains" value="LL=1-199"/>
</dbReference>
<dbReference type="PDB" id="7AZY">
    <property type="method" value="EM"/>
    <property type="resolution" value="2.88 A"/>
    <property type="chains" value="k=1-199"/>
</dbReference>
<dbReference type="PDB" id="7B7D">
    <property type="method" value="EM"/>
    <property type="resolution" value="3.30 A"/>
    <property type="chains" value="LN=2-194"/>
</dbReference>
<dbReference type="PDB" id="7BT6">
    <property type="method" value="EM"/>
    <property type="resolution" value="3.12 A"/>
    <property type="chains" value="L=1-199"/>
</dbReference>
<dbReference type="PDB" id="7BTB">
    <property type="method" value="EM"/>
    <property type="resolution" value="3.22 A"/>
    <property type="chains" value="L=1-199"/>
</dbReference>
<dbReference type="PDB" id="7MPI">
    <property type="method" value="EM"/>
    <property type="resolution" value="3.05 A"/>
    <property type="chains" value="AL=2-194"/>
</dbReference>
<dbReference type="PDB" id="7MPJ">
    <property type="method" value="EM"/>
    <property type="resolution" value="2.70 A"/>
    <property type="chains" value="AL=2-194"/>
</dbReference>
<dbReference type="PDB" id="7N8B">
    <property type="method" value="EM"/>
    <property type="resolution" value="3.05 A"/>
    <property type="chains" value="AL=2-194"/>
</dbReference>
<dbReference type="PDB" id="7NAC">
    <property type="method" value="EM"/>
    <property type="resolution" value="3.04 A"/>
    <property type="chains" value="L=1-199"/>
</dbReference>
<dbReference type="PDB" id="7NRC">
    <property type="method" value="EM"/>
    <property type="resolution" value="3.90 A"/>
    <property type="chains" value="LN=2-194"/>
</dbReference>
<dbReference type="PDB" id="7NRD">
    <property type="method" value="EM"/>
    <property type="resolution" value="4.36 A"/>
    <property type="chains" value="LN=2-194"/>
</dbReference>
<dbReference type="PDB" id="7OF1">
    <property type="method" value="EM"/>
    <property type="resolution" value="3.10 A"/>
    <property type="chains" value="L=1-199"/>
</dbReference>
<dbReference type="PDB" id="7OH3">
    <property type="method" value="EM"/>
    <property type="resolution" value="3.40 A"/>
    <property type="chains" value="L=1-199"/>
</dbReference>
<dbReference type="PDB" id="7OHP">
    <property type="method" value="EM"/>
    <property type="resolution" value="3.90 A"/>
    <property type="chains" value="L=1-199"/>
</dbReference>
<dbReference type="PDB" id="7OHQ">
    <property type="method" value="EM"/>
    <property type="resolution" value="3.10 A"/>
    <property type="chains" value="L=1-199"/>
</dbReference>
<dbReference type="PDB" id="7OHR">
    <property type="method" value="EM"/>
    <property type="resolution" value="4.72 A"/>
    <property type="chains" value="L=1-199"/>
</dbReference>
<dbReference type="PDB" id="7OHS">
    <property type="method" value="EM"/>
    <property type="resolution" value="4.38 A"/>
    <property type="chains" value="L=1-199"/>
</dbReference>
<dbReference type="PDB" id="7OHU">
    <property type="method" value="EM"/>
    <property type="resolution" value="3.70 A"/>
    <property type="chains" value="L=1-199"/>
</dbReference>
<dbReference type="PDB" id="7OHV">
    <property type="method" value="EM"/>
    <property type="resolution" value="3.90 A"/>
    <property type="chains" value="L=1-199"/>
</dbReference>
<dbReference type="PDB" id="7OHW">
    <property type="method" value="EM"/>
    <property type="resolution" value="3.50 A"/>
    <property type="chains" value="L=1-199"/>
</dbReference>
<dbReference type="PDB" id="7OHX">
    <property type="method" value="EM"/>
    <property type="resolution" value="3.30 A"/>
    <property type="chains" value="L=1-199"/>
</dbReference>
<dbReference type="PDB" id="7OHY">
    <property type="method" value="EM"/>
    <property type="resolution" value="3.90 A"/>
    <property type="chains" value="L=1-199"/>
</dbReference>
<dbReference type="PDB" id="7R6Q">
    <property type="method" value="EM"/>
    <property type="resolution" value="2.98 A"/>
    <property type="chains" value="L=1-199"/>
</dbReference>
<dbReference type="PDB" id="7R7A">
    <property type="method" value="EM"/>
    <property type="resolution" value="3.04 A"/>
    <property type="chains" value="L=1-199"/>
</dbReference>
<dbReference type="PDB" id="7TOO">
    <property type="method" value="EM"/>
    <property type="resolution" value="2.70 A"/>
    <property type="chains" value="AL13=1-199"/>
</dbReference>
<dbReference type="PDB" id="7TOP">
    <property type="method" value="EM"/>
    <property type="resolution" value="2.40 A"/>
    <property type="chains" value="AL13=1-199"/>
</dbReference>
<dbReference type="PDB" id="7U0H">
    <property type="method" value="EM"/>
    <property type="resolution" value="2.76 A"/>
    <property type="chains" value="L=1-199"/>
</dbReference>
<dbReference type="PDB" id="7UG6">
    <property type="method" value="EM"/>
    <property type="resolution" value="2.90 A"/>
    <property type="chains" value="L=1-199"/>
</dbReference>
<dbReference type="PDB" id="7UOO">
    <property type="method" value="EM"/>
    <property type="resolution" value="2.34 A"/>
    <property type="chains" value="L=1-199"/>
</dbReference>
<dbReference type="PDB" id="7UQB">
    <property type="method" value="EM"/>
    <property type="resolution" value="2.43 A"/>
    <property type="chains" value="L=1-199"/>
</dbReference>
<dbReference type="PDB" id="7UQZ">
    <property type="method" value="EM"/>
    <property type="resolution" value="2.44 A"/>
    <property type="chains" value="L=1-199"/>
</dbReference>
<dbReference type="PDB" id="7V08">
    <property type="method" value="EM"/>
    <property type="resolution" value="2.36 A"/>
    <property type="chains" value="L=1-199"/>
</dbReference>
<dbReference type="PDB" id="7Z34">
    <property type="method" value="EM"/>
    <property type="resolution" value="3.80 A"/>
    <property type="chains" value="L=1-199"/>
</dbReference>
<dbReference type="PDB" id="7ZPQ">
    <property type="method" value="EM"/>
    <property type="resolution" value="3.47 A"/>
    <property type="chains" value="BK=2-194"/>
</dbReference>
<dbReference type="PDB" id="7ZRS">
    <property type="method" value="EM"/>
    <property type="resolution" value="4.80 A"/>
    <property type="chains" value="BK=2-194"/>
</dbReference>
<dbReference type="PDB" id="7ZS5">
    <property type="method" value="EM"/>
    <property type="resolution" value="3.20 A"/>
    <property type="chains" value="BM=2-194"/>
</dbReference>
<dbReference type="PDB" id="7ZUW">
    <property type="method" value="EM"/>
    <property type="resolution" value="4.30 A"/>
    <property type="chains" value="BK=2-194"/>
</dbReference>
<dbReference type="PDB" id="7ZUX">
    <property type="method" value="EM"/>
    <property type="resolution" value="2.50 A"/>
    <property type="chains" value="EK=2-194"/>
</dbReference>
<dbReference type="PDB" id="7ZW0">
    <property type="method" value="EM"/>
    <property type="resolution" value="2.40 A"/>
    <property type="chains" value="LO=1-199"/>
</dbReference>
<dbReference type="PDB" id="8AAF">
    <property type="method" value="EM"/>
    <property type="resolution" value="2.50 A"/>
    <property type="chains" value="t=1-199"/>
</dbReference>
<dbReference type="PDB" id="8AGT">
    <property type="method" value="EM"/>
    <property type="resolution" value="2.60 A"/>
    <property type="chains" value="t=1-199"/>
</dbReference>
<dbReference type="PDB" id="8AGU">
    <property type="method" value="EM"/>
    <property type="resolution" value="2.70 A"/>
    <property type="chains" value="t=1-199"/>
</dbReference>
<dbReference type="PDB" id="8AGV">
    <property type="method" value="EM"/>
    <property type="resolution" value="2.60 A"/>
    <property type="chains" value="t=1-199"/>
</dbReference>
<dbReference type="PDB" id="8AGW">
    <property type="method" value="EM"/>
    <property type="resolution" value="2.60 A"/>
    <property type="chains" value="t=1-199"/>
</dbReference>
<dbReference type="PDB" id="8AGX">
    <property type="method" value="EM"/>
    <property type="resolution" value="2.40 A"/>
    <property type="chains" value="t=1-199"/>
</dbReference>
<dbReference type="PDB" id="8AGZ">
    <property type="method" value="EM"/>
    <property type="resolution" value="2.60 A"/>
    <property type="chains" value="t=1-199"/>
</dbReference>
<dbReference type="PDB" id="8BIP">
    <property type="method" value="EM"/>
    <property type="resolution" value="3.10 A"/>
    <property type="chains" value="LL=2-194"/>
</dbReference>
<dbReference type="PDB" id="8BJQ">
    <property type="method" value="EM"/>
    <property type="resolution" value="3.80 A"/>
    <property type="chains" value="LL=2-194"/>
</dbReference>
<dbReference type="PDB" id="8BN3">
    <property type="method" value="EM"/>
    <property type="resolution" value="2.40 A"/>
    <property type="chains" value="M3=2-194"/>
</dbReference>
<dbReference type="PDB" id="8BQD">
    <property type="method" value="EM"/>
    <property type="resolution" value="3.90 A"/>
    <property type="chains" value="AJ=2-194"/>
</dbReference>
<dbReference type="PDB" id="8BQX">
    <property type="method" value="EM"/>
    <property type="resolution" value="3.80 A"/>
    <property type="chains" value="AJ=2-194"/>
</dbReference>
<dbReference type="PDB" id="8CCS">
    <property type="method" value="EM"/>
    <property type="resolution" value="1.97 A"/>
    <property type="chains" value="OO=1-199"/>
</dbReference>
<dbReference type="PDB" id="8CDL">
    <property type="method" value="EM"/>
    <property type="resolution" value="2.72 A"/>
    <property type="chains" value="OO=1-199"/>
</dbReference>
<dbReference type="PDB" id="8CDR">
    <property type="method" value="EM"/>
    <property type="resolution" value="2.04 A"/>
    <property type="chains" value="OO=1-199"/>
</dbReference>
<dbReference type="PDB" id="8CEH">
    <property type="method" value="EM"/>
    <property type="resolution" value="2.05 A"/>
    <property type="chains" value="OO=1-199"/>
</dbReference>
<dbReference type="PDB" id="8CF5">
    <property type="method" value="EM"/>
    <property type="resolution" value="2.71 A"/>
    <property type="chains" value="OO=1-199"/>
</dbReference>
<dbReference type="PDB" id="8CG8">
    <property type="method" value="EM"/>
    <property type="resolution" value="2.57 A"/>
    <property type="chains" value="OO=1-199"/>
</dbReference>
<dbReference type="PDB" id="8CGN">
    <property type="method" value="EM"/>
    <property type="resolution" value="2.28 A"/>
    <property type="chains" value="OO=1-199"/>
</dbReference>
<dbReference type="PDB" id="8CIV">
    <property type="method" value="EM"/>
    <property type="resolution" value="2.47 A"/>
    <property type="chains" value="OO=1-199"/>
</dbReference>
<dbReference type="PDB" id="8CKU">
    <property type="method" value="EM"/>
    <property type="resolution" value="3.11 A"/>
    <property type="chains" value="OO=1-199"/>
</dbReference>
<dbReference type="PDB" id="8CMJ">
    <property type="method" value="EM"/>
    <property type="resolution" value="3.79 A"/>
    <property type="chains" value="OO=1-199"/>
</dbReference>
<dbReference type="PDB" id="8E5T">
    <property type="method" value="EM"/>
    <property type="resolution" value="4.00 A"/>
    <property type="chains" value="L=1-199"/>
</dbReference>
<dbReference type="PDB" id="8EUB">
    <property type="method" value="EM"/>
    <property type="resolution" value="2.52 A"/>
    <property type="chains" value="AL=1-199"/>
</dbReference>
<dbReference type="PDB" id="8EVP">
    <property type="method" value="EM"/>
    <property type="resolution" value="2.38 A"/>
    <property type="chains" value="AL=1-199"/>
</dbReference>
<dbReference type="PDB" id="8EVQ">
    <property type="method" value="EM"/>
    <property type="resolution" value="2.72 A"/>
    <property type="chains" value="AL=1-199"/>
</dbReference>
<dbReference type="PDB" id="8EVR">
    <property type="method" value="EM"/>
    <property type="resolution" value="2.87 A"/>
    <property type="chains" value="AL=1-199"/>
</dbReference>
<dbReference type="PDB" id="8EVS">
    <property type="method" value="EM"/>
    <property type="resolution" value="2.62 A"/>
    <property type="chains" value="AL=1-199"/>
</dbReference>
<dbReference type="PDB" id="8EVT">
    <property type="method" value="EM"/>
    <property type="resolution" value="2.20 A"/>
    <property type="chains" value="AL=1-199"/>
</dbReference>
<dbReference type="PDB" id="8EWB">
    <property type="method" value="EM"/>
    <property type="resolution" value="2.87 A"/>
    <property type="chains" value="AL=1-199"/>
</dbReference>
<dbReference type="PDB" id="8EWC">
    <property type="method" value="EM"/>
    <property type="resolution" value="2.45 A"/>
    <property type="chains" value="AL=1-199"/>
</dbReference>
<dbReference type="PDB" id="8HFR">
    <property type="method" value="EM"/>
    <property type="resolution" value="2.64 A"/>
    <property type="chains" value="LL=1-199"/>
</dbReference>
<dbReference type="PDB" id="8K2D">
    <property type="method" value="EM"/>
    <property type="resolution" value="3.20 A"/>
    <property type="chains" value="LL=1-199"/>
</dbReference>
<dbReference type="PDB" id="8K82">
    <property type="method" value="EM"/>
    <property type="resolution" value="3.00 A"/>
    <property type="chains" value="LL=1-199"/>
</dbReference>
<dbReference type="PDB" id="8P4V">
    <property type="method" value="X-ray"/>
    <property type="resolution" value="3.16 A"/>
    <property type="chains" value="CN/t=1-199"/>
</dbReference>
<dbReference type="PDB" id="8P8M">
    <property type="method" value="EM"/>
    <property type="resolution" value="2.66 A"/>
    <property type="chains" value="JT=1-199"/>
</dbReference>
<dbReference type="PDB" id="8P8N">
    <property type="method" value="EM"/>
    <property type="resolution" value="2.15 A"/>
    <property type="chains" value="JT=1-199"/>
</dbReference>
<dbReference type="PDB" id="8P8U">
    <property type="method" value="EM"/>
    <property type="resolution" value="2.23 A"/>
    <property type="chains" value="JT=1-199"/>
</dbReference>
<dbReference type="PDB" id="8P9A">
    <property type="method" value="X-ray"/>
    <property type="resolution" value="2.90 A"/>
    <property type="chains" value="CN/t=1-199"/>
</dbReference>
<dbReference type="PDB" id="8PFR">
    <property type="method" value="EM"/>
    <property type="resolution" value="2.15 A"/>
    <property type="chains" value="JT=1-199"/>
</dbReference>
<dbReference type="PDB" id="8T2X">
    <property type="method" value="EM"/>
    <property type="resolution" value="2.46 A"/>
    <property type="chains" value="AL=1-199"/>
</dbReference>
<dbReference type="PDB" id="8T2Y">
    <property type="method" value="EM"/>
    <property type="resolution" value="2.20 A"/>
    <property type="chains" value="AL=1-199"/>
</dbReference>
<dbReference type="PDB" id="8T2Z">
    <property type="method" value="EM"/>
    <property type="resolution" value="2.40 A"/>
    <property type="chains" value="AL=1-199"/>
</dbReference>
<dbReference type="PDB" id="8T30">
    <property type="method" value="EM"/>
    <property type="resolution" value="2.88 A"/>
    <property type="chains" value="AL=1-199"/>
</dbReference>
<dbReference type="PDB" id="8T3A">
    <property type="method" value="EM"/>
    <property type="resolution" value="2.86 A"/>
    <property type="chains" value="AL=1-199"/>
</dbReference>
<dbReference type="PDB" id="8T3B">
    <property type="method" value="EM"/>
    <property type="resolution" value="3.08 A"/>
    <property type="chains" value="AL=1-199"/>
</dbReference>
<dbReference type="PDB" id="8T3C">
    <property type="method" value="EM"/>
    <property type="resolution" value="3.86 A"/>
    <property type="chains" value="AL=1-199"/>
</dbReference>
<dbReference type="PDB" id="8T3D">
    <property type="method" value="EM"/>
    <property type="resolution" value="2.95 A"/>
    <property type="chains" value="AL=1-199"/>
</dbReference>
<dbReference type="PDB" id="8T3E">
    <property type="method" value="EM"/>
    <property type="resolution" value="3.04 A"/>
    <property type="chains" value="AL=1-199"/>
</dbReference>
<dbReference type="PDB" id="8T3F">
    <property type="method" value="EM"/>
    <property type="resolution" value="3.09 A"/>
    <property type="chains" value="AL=1-199"/>
</dbReference>
<dbReference type="PDB" id="8UT0">
    <property type="method" value="EM"/>
    <property type="resolution" value="3.22 A"/>
    <property type="chains" value="LN=2-194"/>
</dbReference>
<dbReference type="PDB" id="8UTI">
    <property type="method" value="EM"/>
    <property type="resolution" value="3.13 A"/>
    <property type="chains" value="LN=2-194"/>
</dbReference>
<dbReference type="PDB" id="8V83">
    <property type="method" value="EM"/>
    <property type="resolution" value="2.53 A"/>
    <property type="chains" value="L=1-199"/>
</dbReference>
<dbReference type="PDB" id="8V84">
    <property type="method" value="EM"/>
    <property type="resolution" value="2.70 A"/>
    <property type="chains" value="L=1-199"/>
</dbReference>
<dbReference type="PDB" id="8V87">
    <property type="method" value="EM"/>
    <property type="resolution" value="2.66 A"/>
    <property type="chains" value="L=1-199"/>
</dbReference>
<dbReference type="PDB" id="8XU8">
    <property type="method" value="EM"/>
    <property type="resolution" value="3.40 A"/>
    <property type="chains" value="N=2-194"/>
</dbReference>
<dbReference type="PDB" id="8Y0U">
    <property type="method" value="EM"/>
    <property type="resolution" value="3.59 A"/>
    <property type="chains" value="LL=1-199"/>
</dbReference>
<dbReference type="PDB" id="8YLD">
    <property type="method" value="EM"/>
    <property type="resolution" value="3.90 A"/>
    <property type="chains" value="N=2-194"/>
</dbReference>
<dbReference type="PDB" id="8YLR">
    <property type="method" value="EM"/>
    <property type="resolution" value="3.90 A"/>
    <property type="chains" value="N=2-194"/>
</dbReference>
<dbReference type="PDB" id="8Z70">
    <property type="method" value="EM"/>
    <property type="resolution" value="3.20 A"/>
    <property type="chains" value="N=2-194"/>
</dbReference>
<dbReference type="PDB" id="8Z71">
    <property type="method" value="EM"/>
    <property type="resolution" value="3.60 A"/>
    <property type="chains" value="N=2-194"/>
</dbReference>
<dbReference type="PDB" id="9F9S">
    <property type="method" value="EM"/>
    <property type="resolution" value="2.90 A"/>
    <property type="chains" value="LG/MG=1-199"/>
</dbReference>
<dbReference type="PDBsum" id="3J6X"/>
<dbReference type="PDBsum" id="3J6Y"/>
<dbReference type="PDBsum" id="3J77"/>
<dbReference type="PDBsum" id="3J78"/>
<dbReference type="PDBsum" id="3JCT"/>
<dbReference type="PDBsum" id="4U3M"/>
<dbReference type="PDBsum" id="4U3N"/>
<dbReference type="PDBsum" id="4U3U"/>
<dbReference type="PDBsum" id="4U4N"/>
<dbReference type="PDBsum" id="4U4O"/>
<dbReference type="PDBsum" id="4U4Q"/>
<dbReference type="PDBsum" id="4U4R"/>
<dbReference type="PDBsum" id="4U4U"/>
<dbReference type="PDBsum" id="4U4Y"/>
<dbReference type="PDBsum" id="4U4Z"/>
<dbReference type="PDBsum" id="4U50"/>
<dbReference type="PDBsum" id="4U51"/>
<dbReference type="PDBsum" id="4U52"/>
<dbReference type="PDBsum" id="4U53"/>
<dbReference type="PDBsum" id="4U55"/>
<dbReference type="PDBsum" id="4U56"/>
<dbReference type="PDBsum" id="4U6F"/>
<dbReference type="PDBsum" id="4V7F"/>
<dbReference type="PDBsum" id="4V88"/>
<dbReference type="PDBsum" id="4V8T"/>
<dbReference type="PDBsum" id="4V8Y"/>
<dbReference type="PDBsum" id="4V8Z"/>
<dbReference type="PDBsum" id="5APN"/>
<dbReference type="PDBsum" id="5APO"/>
<dbReference type="PDBsum" id="5DAT"/>
<dbReference type="PDBsum" id="5DC3"/>
<dbReference type="PDBsum" id="5DGE"/>
<dbReference type="PDBsum" id="5DGF"/>
<dbReference type="PDBsum" id="5DGV"/>
<dbReference type="PDBsum" id="5FCI"/>
<dbReference type="PDBsum" id="5FCJ"/>
<dbReference type="PDBsum" id="5GAK"/>
<dbReference type="PDBsum" id="5H4P"/>
<dbReference type="PDBsum" id="5I4L"/>
<dbReference type="PDBsum" id="5JCS"/>
<dbReference type="PDBsum" id="5JUO"/>
<dbReference type="PDBsum" id="5JUP"/>
<dbReference type="PDBsum" id="5JUS"/>
<dbReference type="PDBsum" id="5JUT"/>
<dbReference type="PDBsum" id="5JUU"/>
<dbReference type="PDBsum" id="5LYB"/>
<dbReference type="PDBsum" id="5M1J"/>
<dbReference type="PDBsum" id="5MC6"/>
<dbReference type="PDBsum" id="5MEI"/>
<dbReference type="PDBsum" id="5NDG"/>
<dbReference type="PDBsum" id="5NDV"/>
<dbReference type="PDBsum" id="5NDW"/>
<dbReference type="PDBsum" id="5OBM"/>
<dbReference type="PDBsum" id="5ON6"/>
<dbReference type="PDBsum" id="5T62"/>
<dbReference type="PDBsum" id="5T6R"/>
<dbReference type="PDBsum" id="5TBW"/>
<dbReference type="PDBsum" id="5TGA"/>
<dbReference type="PDBsum" id="5TGM"/>
<dbReference type="PDBsum" id="5Z3G"/>
<dbReference type="PDBsum" id="6C0F"/>
<dbReference type="PDBsum" id="6CB1"/>
<dbReference type="PDBsum" id="6ELZ"/>
<dbReference type="PDBsum" id="6EM1"/>
<dbReference type="PDBsum" id="6EM3"/>
<dbReference type="PDBsum" id="6EM4"/>
<dbReference type="PDBsum" id="6EM5"/>
<dbReference type="PDBsum" id="6FT6"/>
<dbReference type="PDBsum" id="6GQ1"/>
<dbReference type="PDBsum" id="6GQB"/>
<dbReference type="PDBsum" id="6GQV"/>
<dbReference type="PDBsum" id="6HD7"/>
<dbReference type="PDBsum" id="6HHQ"/>
<dbReference type="PDBsum" id="6I7O"/>
<dbReference type="PDBsum" id="6M62"/>
<dbReference type="PDBsum" id="6N8J"/>
<dbReference type="PDBsum" id="6N8K"/>
<dbReference type="PDBsum" id="6N8L"/>
<dbReference type="PDBsum" id="6N8M"/>
<dbReference type="PDBsum" id="6N8N"/>
<dbReference type="PDBsum" id="6N8O"/>
<dbReference type="PDBsum" id="6OIG"/>
<dbReference type="PDBsum" id="6Q8Y"/>
<dbReference type="PDBsum" id="6QIK"/>
<dbReference type="PDBsum" id="6QT0"/>
<dbReference type="PDBsum" id="6QTZ"/>
<dbReference type="PDBsum" id="6R84"/>
<dbReference type="PDBsum" id="6R86"/>
<dbReference type="PDBsum" id="6R87"/>
<dbReference type="PDBsum" id="6RI5"/>
<dbReference type="PDBsum" id="6RZZ"/>
<dbReference type="PDBsum" id="6S05"/>
<dbReference type="PDBsum" id="6S47"/>
<dbReference type="PDBsum" id="6SNT"/>
<dbReference type="PDBsum" id="6SV4"/>
<dbReference type="PDBsum" id="6T4Q"/>
<dbReference type="PDBsum" id="6T7I"/>
<dbReference type="PDBsum" id="6T7T"/>
<dbReference type="PDBsum" id="6T83"/>
<dbReference type="PDBsum" id="6TB3"/>
<dbReference type="PDBsum" id="6TNU"/>
<dbReference type="PDBsum" id="6WOO"/>
<dbReference type="PDBsum" id="6XIQ"/>
<dbReference type="PDBsum" id="6XIR"/>
<dbReference type="PDBsum" id="6YLG"/>
<dbReference type="PDBsum" id="6YLH"/>
<dbReference type="PDBsum" id="6YLX"/>
<dbReference type="PDBsum" id="6YLY"/>
<dbReference type="PDBsum" id="6Z6J"/>
<dbReference type="PDBsum" id="6Z6K"/>
<dbReference type="PDBsum" id="7AZY"/>
<dbReference type="PDBsum" id="7B7D"/>
<dbReference type="PDBsum" id="7BT6"/>
<dbReference type="PDBsum" id="7BTB"/>
<dbReference type="PDBsum" id="7MPI"/>
<dbReference type="PDBsum" id="7MPJ"/>
<dbReference type="PDBsum" id="7N8B"/>
<dbReference type="PDBsum" id="7NAC"/>
<dbReference type="PDBsum" id="7NRC"/>
<dbReference type="PDBsum" id="7NRD"/>
<dbReference type="PDBsum" id="7OF1"/>
<dbReference type="PDBsum" id="7OH3"/>
<dbReference type="PDBsum" id="7OHP"/>
<dbReference type="PDBsum" id="7OHQ"/>
<dbReference type="PDBsum" id="7OHR"/>
<dbReference type="PDBsum" id="7OHS"/>
<dbReference type="PDBsum" id="7OHU"/>
<dbReference type="PDBsum" id="7OHV"/>
<dbReference type="PDBsum" id="7OHW"/>
<dbReference type="PDBsum" id="7OHX"/>
<dbReference type="PDBsum" id="7OHY"/>
<dbReference type="PDBsum" id="7R6Q"/>
<dbReference type="PDBsum" id="7R7A"/>
<dbReference type="PDBsum" id="7TOO"/>
<dbReference type="PDBsum" id="7TOP"/>
<dbReference type="PDBsum" id="7U0H"/>
<dbReference type="PDBsum" id="7UG6"/>
<dbReference type="PDBsum" id="7UOO"/>
<dbReference type="PDBsum" id="7UQB"/>
<dbReference type="PDBsum" id="7UQZ"/>
<dbReference type="PDBsum" id="7V08"/>
<dbReference type="PDBsum" id="7Z34"/>
<dbReference type="PDBsum" id="7ZPQ"/>
<dbReference type="PDBsum" id="7ZRS"/>
<dbReference type="PDBsum" id="7ZS5"/>
<dbReference type="PDBsum" id="7ZUW"/>
<dbReference type="PDBsum" id="7ZUX"/>
<dbReference type="PDBsum" id="7ZW0"/>
<dbReference type="PDBsum" id="8AAF"/>
<dbReference type="PDBsum" id="8AGT"/>
<dbReference type="PDBsum" id="8AGU"/>
<dbReference type="PDBsum" id="8AGV"/>
<dbReference type="PDBsum" id="8AGW"/>
<dbReference type="PDBsum" id="8AGX"/>
<dbReference type="PDBsum" id="8AGZ"/>
<dbReference type="PDBsum" id="8BIP"/>
<dbReference type="PDBsum" id="8BJQ"/>
<dbReference type="PDBsum" id="8BN3"/>
<dbReference type="PDBsum" id="8BQD"/>
<dbReference type="PDBsum" id="8BQX"/>
<dbReference type="PDBsum" id="8CCS"/>
<dbReference type="PDBsum" id="8CDL"/>
<dbReference type="PDBsum" id="8CDR"/>
<dbReference type="PDBsum" id="8CEH"/>
<dbReference type="PDBsum" id="8CF5"/>
<dbReference type="PDBsum" id="8CG8"/>
<dbReference type="PDBsum" id="8CGN"/>
<dbReference type="PDBsum" id="8CIV"/>
<dbReference type="PDBsum" id="8CKU"/>
<dbReference type="PDBsum" id="8CMJ"/>
<dbReference type="PDBsum" id="8E5T"/>
<dbReference type="PDBsum" id="8EUB"/>
<dbReference type="PDBsum" id="8EVP"/>
<dbReference type="PDBsum" id="8EVQ"/>
<dbReference type="PDBsum" id="8EVR"/>
<dbReference type="PDBsum" id="8EVS"/>
<dbReference type="PDBsum" id="8EVT"/>
<dbReference type="PDBsum" id="8EWB"/>
<dbReference type="PDBsum" id="8EWC"/>
<dbReference type="PDBsum" id="8HFR"/>
<dbReference type="PDBsum" id="8K2D"/>
<dbReference type="PDBsum" id="8K82"/>
<dbReference type="PDBsum" id="8P4V"/>
<dbReference type="PDBsum" id="8P8M"/>
<dbReference type="PDBsum" id="8P8N"/>
<dbReference type="PDBsum" id="8P8U"/>
<dbReference type="PDBsum" id="8P9A"/>
<dbReference type="PDBsum" id="8PFR"/>
<dbReference type="PDBsum" id="8T2X"/>
<dbReference type="PDBsum" id="8T2Y"/>
<dbReference type="PDBsum" id="8T2Z"/>
<dbReference type="PDBsum" id="8T30"/>
<dbReference type="PDBsum" id="8T3A"/>
<dbReference type="PDBsum" id="8T3B"/>
<dbReference type="PDBsum" id="8T3C"/>
<dbReference type="PDBsum" id="8T3D"/>
<dbReference type="PDBsum" id="8T3E"/>
<dbReference type="PDBsum" id="8T3F"/>
<dbReference type="PDBsum" id="8UT0"/>
<dbReference type="PDBsum" id="8UTI"/>
<dbReference type="PDBsum" id="8V83"/>
<dbReference type="PDBsum" id="8V84"/>
<dbReference type="PDBsum" id="8V87"/>
<dbReference type="PDBsum" id="8XU8"/>
<dbReference type="PDBsum" id="8Y0U"/>
<dbReference type="PDBsum" id="8YLD"/>
<dbReference type="PDBsum" id="8YLR"/>
<dbReference type="PDBsum" id="8Z70"/>
<dbReference type="PDBsum" id="8Z71"/>
<dbReference type="PDBsum" id="9F9S"/>
<dbReference type="EMDB" id="EMD-0369"/>
<dbReference type="EMDB" id="EMD-0370"/>
<dbReference type="EMDB" id="EMD-0371"/>
<dbReference type="EMDB" id="EMD-0372"/>
<dbReference type="EMDB" id="EMD-0373"/>
<dbReference type="EMDB" id="EMD-10068"/>
<dbReference type="EMDB" id="EMD-10071"/>
<dbReference type="EMDB" id="EMD-10315"/>
<dbReference type="EMDB" id="EMD-10377"/>
<dbReference type="EMDB" id="EMD-10396"/>
<dbReference type="EMDB" id="EMD-10397"/>
<dbReference type="EMDB" id="EMD-10398"/>
<dbReference type="EMDB" id="EMD-10431"/>
<dbReference type="EMDB" id="EMD-10537"/>
<dbReference type="EMDB" id="EMD-10841"/>
<dbReference type="EMDB" id="EMD-10842"/>
<dbReference type="EMDB" id="EMD-11096"/>
<dbReference type="EMDB" id="EMD-11097"/>
<dbReference type="EMDB" id="EMD-11951"/>
<dbReference type="EMDB" id="EMD-12866"/>
<dbReference type="EMDB" id="EMD-12892"/>
<dbReference type="EMDB" id="EMD-12904"/>
<dbReference type="EMDB" id="EMD-12905"/>
<dbReference type="EMDB" id="EMD-12906"/>
<dbReference type="EMDB" id="EMD-12907"/>
<dbReference type="EMDB" id="EMD-12909"/>
<dbReference type="EMDB" id="EMD-12910"/>
<dbReference type="EMDB" id="EMD-12911"/>
<dbReference type="EMDB" id="EMD-12912"/>
<dbReference type="EMDB" id="EMD-12913"/>
<dbReference type="EMDB" id="EMD-14471"/>
<dbReference type="EMDB" id="EMD-14861"/>
<dbReference type="EMDB" id="EMD-14921"/>
<dbReference type="EMDB" id="EMD-14926"/>
<dbReference type="EMDB" id="EMD-14978"/>
<dbReference type="EMDB" id="EMD-14979"/>
<dbReference type="EMDB" id="EMD-14990"/>
<dbReference type="EMDB" id="EMD-15296"/>
<dbReference type="EMDB" id="EMD-15423"/>
<dbReference type="EMDB" id="EMD-15424"/>
<dbReference type="EMDB" id="EMD-15425"/>
<dbReference type="EMDB" id="EMD-15426"/>
<dbReference type="EMDB" id="EMD-15427"/>
<dbReference type="EMDB" id="EMD-15428"/>
<dbReference type="EMDB" id="EMD-16086"/>
<dbReference type="EMDB" id="EMD-16090"/>
<dbReference type="EMDB" id="EMD-16127"/>
<dbReference type="EMDB" id="EMD-16182"/>
<dbReference type="EMDB" id="EMD-16563"/>
<dbReference type="EMDB" id="EMD-16591"/>
<dbReference type="EMDB" id="EMD-16594"/>
<dbReference type="EMDB" id="EMD-16609"/>
<dbReference type="EMDB" id="EMD-16616"/>
<dbReference type="EMDB" id="EMD-16634"/>
<dbReference type="EMDB" id="EMD-16648"/>
<dbReference type="EMDB" id="EMD-16684"/>
<dbReference type="EMDB" id="EMD-16702"/>
<dbReference type="EMDB" id="EMD-16729"/>
<dbReference type="EMDB" id="EMD-17549"/>
<dbReference type="EMDB" id="EMD-17550"/>
<dbReference type="EMDB" id="EMD-17552"/>
<dbReference type="EMDB" id="EMD-17653"/>
<dbReference type="EMDB" id="EMD-20077"/>
<dbReference type="EMDB" id="EMD-21859"/>
<dbReference type="EMDB" id="EMD-22196"/>
<dbReference type="EMDB" id="EMD-22198"/>
<dbReference type="EMDB" id="EMD-23934"/>
<dbReference type="EMDB" id="EMD-23935"/>
<dbReference type="EMDB" id="EMD-24235"/>
<dbReference type="EMDB" id="EMD-24269"/>
<dbReference type="EMDB" id="EMD-24286"/>
<dbReference type="EMDB" id="EMD-24296"/>
<dbReference type="EMDB" id="EMD-26033"/>
<dbReference type="EMDB" id="EMD-26034"/>
<dbReference type="EMDB" id="EMD-26259"/>
<dbReference type="EMDB" id="EMD-26485"/>
<dbReference type="EMDB" id="EMD-26651"/>
<dbReference type="EMDB" id="EMD-26686"/>
<dbReference type="EMDB" id="EMD-26703"/>
<dbReference type="EMDB" id="EMD-26941"/>
<dbReference type="EMDB" id="EMD-27919"/>
<dbReference type="EMDB" id="EMD-28610"/>
<dbReference type="EMDB" id="EMD-28632"/>
<dbReference type="EMDB" id="EMD-28633"/>
<dbReference type="EMDB" id="EMD-28634"/>
<dbReference type="EMDB" id="EMD-28635"/>
<dbReference type="EMDB" id="EMD-28636"/>
<dbReference type="EMDB" id="EMD-28642"/>
<dbReference type="EMDB" id="EMD-28643"/>
<dbReference type="EMDB" id="EMD-30108"/>
<dbReference type="EMDB" id="EMD-30170"/>
<dbReference type="EMDB" id="EMD-30174"/>
<dbReference type="EMDB" id="EMD-34725"/>
<dbReference type="EMDB" id="EMD-36839"/>
<dbReference type="EMDB" id="EMD-36945"/>
<dbReference type="EMDB" id="EMD-38660"/>
<dbReference type="EMDB" id="EMD-40990"/>
<dbReference type="EMDB" id="EMD-40991"/>
<dbReference type="EMDB" id="EMD-40992"/>
<dbReference type="EMDB" id="EMD-40993"/>
<dbReference type="EMDB" id="EMD-40997"/>
<dbReference type="EMDB" id="EMD-40998"/>
<dbReference type="EMDB" id="EMD-40999"/>
<dbReference type="EMDB" id="EMD-41000"/>
<dbReference type="EMDB" id="EMD-41001"/>
<dbReference type="EMDB" id="EMD-41002"/>
<dbReference type="EMDB" id="EMD-4140"/>
<dbReference type="EMDB" id="EMD-42525"/>
<dbReference type="EMDB" id="EMD-42540"/>
<dbReference type="EMDB" id="EMD-43017"/>
<dbReference type="EMDB" id="EMD-4302"/>
<dbReference type="EMDB" id="EMD-43021"/>
<dbReference type="EMDB" id="EMD-43027"/>
<dbReference type="EMDB" id="EMD-4427"/>
<dbReference type="EMDB" id="EMD-4474"/>
<dbReference type="EMDB" id="EMD-4560"/>
<dbReference type="EMDB" id="EMD-4630"/>
<dbReference type="EMDB" id="EMD-4636"/>
<dbReference type="EMDB" id="EMD-4751"/>
<dbReference type="EMDB" id="EMD-4752"/>
<dbReference type="EMDB" id="EMD-4753"/>
<dbReference type="EMDB" id="EMD-4884"/>
<dbReference type="EMDB" id="EMD-50259"/>
<dbReference type="EMDB" id="EMD-6878"/>
<dbReference type="EMDB" id="EMD-7324"/>
<dbReference type="EMDB" id="EMD-8362"/>
<dbReference type="EMDB" id="EMD-8368"/>
<dbReference type="SMR" id="Q12690"/>
<dbReference type="BioGRID" id="31979">
    <property type="interactions" value="412"/>
</dbReference>
<dbReference type="ComplexPortal" id="CPX-1601">
    <property type="entry name" value="60S cytosolic large ribosomal subunit"/>
</dbReference>
<dbReference type="FunCoup" id="Q12690">
    <property type="interactions" value="1057"/>
</dbReference>
<dbReference type="IntAct" id="Q12690">
    <property type="interactions" value="91"/>
</dbReference>
<dbReference type="MINT" id="Q12690"/>
<dbReference type="STRING" id="4932.YDL082W"/>
<dbReference type="iPTMnet" id="Q12690"/>
<dbReference type="PaxDb" id="4932-YDL082W"/>
<dbReference type="PeptideAtlas" id="Q12690"/>
<dbReference type="TopDownProteomics" id="Q12690"/>
<dbReference type="EnsemblFungi" id="YDL082W_mRNA">
    <property type="protein sequence ID" value="YDL082W"/>
    <property type="gene ID" value="YDL082W"/>
</dbReference>
<dbReference type="GeneID" id="851477"/>
<dbReference type="KEGG" id="sce:YDL082W"/>
<dbReference type="AGR" id="SGD:S000002240"/>
<dbReference type="SGD" id="S000002240">
    <property type="gene designation" value="RPL13A"/>
</dbReference>
<dbReference type="VEuPathDB" id="FungiDB:YDL082W"/>
<dbReference type="eggNOG" id="KOG3295">
    <property type="taxonomic scope" value="Eukaryota"/>
</dbReference>
<dbReference type="GeneTree" id="ENSGT00390000007818"/>
<dbReference type="HOGENOM" id="CLU_075696_1_0_1"/>
<dbReference type="InParanoid" id="Q12690"/>
<dbReference type="OMA" id="HWHKRIK"/>
<dbReference type="OrthoDB" id="10264538at2759"/>
<dbReference type="BioCyc" id="YEAST:G3O-29491-MONOMER"/>
<dbReference type="BioGRID-ORCS" id="851477">
    <property type="hits" value="0 hits in 10 CRISPR screens"/>
</dbReference>
<dbReference type="PRO" id="PR:Q12690"/>
<dbReference type="Proteomes" id="UP000002311">
    <property type="component" value="Chromosome IV"/>
</dbReference>
<dbReference type="RNAct" id="Q12690">
    <property type="molecule type" value="protein"/>
</dbReference>
<dbReference type="GO" id="GO:0005829">
    <property type="term" value="C:cytosol"/>
    <property type="evidence" value="ECO:0000304"/>
    <property type="project" value="Reactome"/>
</dbReference>
<dbReference type="GO" id="GO:0022625">
    <property type="term" value="C:cytosolic large ribosomal subunit"/>
    <property type="evidence" value="ECO:0000314"/>
    <property type="project" value="SGD"/>
</dbReference>
<dbReference type="GO" id="GO:0003723">
    <property type="term" value="F:RNA binding"/>
    <property type="evidence" value="ECO:0000318"/>
    <property type="project" value="GO_Central"/>
</dbReference>
<dbReference type="GO" id="GO:0003735">
    <property type="term" value="F:structural constituent of ribosome"/>
    <property type="evidence" value="ECO:0000318"/>
    <property type="project" value="GO_Central"/>
</dbReference>
<dbReference type="GO" id="GO:0002181">
    <property type="term" value="P:cytoplasmic translation"/>
    <property type="evidence" value="ECO:0000305"/>
    <property type="project" value="SGD"/>
</dbReference>
<dbReference type="FunFam" id="1.20.5.110:FF:000003">
    <property type="entry name" value="60S ribosomal protein L13"/>
    <property type="match status" value="1"/>
</dbReference>
<dbReference type="Gene3D" id="1.20.5.110">
    <property type="match status" value="1"/>
</dbReference>
<dbReference type="HAMAP" id="MF_00499">
    <property type="entry name" value="Ribosomal_eL13"/>
    <property type="match status" value="1"/>
</dbReference>
<dbReference type="InterPro" id="IPR001380">
    <property type="entry name" value="Ribosomal_eL13"/>
</dbReference>
<dbReference type="InterPro" id="IPR018256">
    <property type="entry name" value="Ribosomal_eL13_CS"/>
</dbReference>
<dbReference type="PANTHER" id="PTHR11722">
    <property type="entry name" value="60S RIBOSOMAL PROTEIN L13"/>
    <property type="match status" value="1"/>
</dbReference>
<dbReference type="PANTHER" id="PTHR11722:SF0">
    <property type="entry name" value="LARGE RIBOSOMAL SUBUNIT PROTEIN EL13"/>
    <property type="match status" value="1"/>
</dbReference>
<dbReference type="Pfam" id="PF01294">
    <property type="entry name" value="Ribosomal_L13e"/>
    <property type="match status" value="1"/>
</dbReference>
<dbReference type="PROSITE" id="PS01104">
    <property type="entry name" value="RIBOSOMAL_L13E"/>
    <property type="match status" value="1"/>
</dbReference>